<proteinExistence type="inferred from homology"/>
<name>MINE_PSEAB</name>
<feature type="chain" id="PRO_0000298159" description="Cell division topological specificity factor">
    <location>
        <begin position="1"/>
        <end position="84"/>
    </location>
</feature>
<sequence>MSLLDFFRSRKSQNSASIAKERLQIIVAHERGQRAQPDYLPQLQKDLLEVIRKYVPIDQEQIQVELENQGNCSILELNITLPDR</sequence>
<reference key="1">
    <citation type="journal article" date="2006" name="Genome Biol.">
        <title>Genomic analysis reveals that Pseudomonas aeruginosa virulence is combinatorial.</title>
        <authorList>
            <person name="Lee D.G."/>
            <person name="Urbach J.M."/>
            <person name="Wu G."/>
            <person name="Liberati N.T."/>
            <person name="Feinbaum R.L."/>
            <person name="Miyata S."/>
            <person name="Diggins L.T."/>
            <person name="He J."/>
            <person name="Saucier M."/>
            <person name="Deziel E."/>
            <person name="Friedman L."/>
            <person name="Li L."/>
            <person name="Grills G."/>
            <person name="Montgomery K."/>
            <person name="Kucherlapati R."/>
            <person name="Rahme L.G."/>
            <person name="Ausubel F.M."/>
        </authorList>
    </citation>
    <scope>NUCLEOTIDE SEQUENCE [LARGE SCALE GENOMIC DNA]</scope>
    <source>
        <strain>UCBPP-PA14</strain>
    </source>
</reference>
<keyword id="KW-0131">Cell cycle</keyword>
<keyword id="KW-0132">Cell division</keyword>
<accession>Q02Q76</accession>
<organism>
    <name type="scientific">Pseudomonas aeruginosa (strain UCBPP-PA14)</name>
    <dbReference type="NCBI Taxonomy" id="208963"/>
    <lineage>
        <taxon>Bacteria</taxon>
        <taxon>Pseudomonadati</taxon>
        <taxon>Pseudomonadota</taxon>
        <taxon>Gammaproteobacteria</taxon>
        <taxon>Pseudomonadales</taxon>
        <taxon>Pseudomonadaceae</taxon>
        <taxon>Pseudomonas</taxon>
    </lineage>
</organism>
<gene>
    <name evidence="1" type="primary">minE</name>
    <name type="ordered locus">PA14_22010</name>
</gene>
<comment type="function">
    <text evidence="1">Prevents the cell division inhibition by proteins MinC and MinD at internal division sites while permitting inhibition at polar sites. This ensures cell division at the proper site by restricting the formation of a division septum at the midpoint of the long axis of the cell.</text>
</comment>
<comment type="similarity">
    <text evidence="1">Belongs to the MinE family.</text>
</comment>
<dbReference type="EMBL" id="CP000438">
    <property type="protein sequence ID" value="ABJ12494.1"/>
    <property type="molecule type" value="Genomic_DNA"/>
</dbReference>
<dbReference type="RefSeq" id="WP_003091581.1">
    <property type="nucleotide sequence ID" value="NZ_CP034244.1"/>
</dbReference>
<dbReference type="SMR" id="Q02Q76"/>
<dbReference type="GeneID" id="77220234"/>
<dbReference type="KEGG" id="pau:PA14_22010"/>
<dbReference type="PseudoCAP" id="PA14_22010"/>
<dbReference type="HOGENOM" id="CLU_137929_2_1_6"/>
<dbReference type="BioCyc" id="PAER208963:G1G74-1829-MONOMER"/>
<dbReference type="Proteomes" id="UP000000653">
    <property type="component" value="Chromosome"/>
</dbReference>
<dbReference type="GO" id="GO:0051301">
    <property type="term" value="P:cell division"/>
    <property type="evidence" value="ECO:0007669"/>
    <property type="project" value="UniProtKB-KW"/>
</dbReference>
<dbReference type="GO" id="GO:0032955">
    <property type="term" value="P:regulation of division septum assembly"/>
    <property type="evidence" value="ECO:0007669"/>
    <property type="project" value="InterPro"/>
</dbReference>
<dbReference type="FunFam" id="3.30.1070.10:FF:000001">
    <property type="entry name" value="Cell division topological specificity factor"/>
    <property type="match status" value="1"/>
</dbReference>
<dbReference type="Gene3D" id="3.30.1070.10">
    <property type="entry name" value="Cell division topological specificity factor MinE"/>
    <property type="match status" value="1"/>
</dbReference>
<dbReference type="HAMAP" id="MF_00262">
    <property type="entry name" value="MinE"/>
    <property type="match status" value="1"/>
</dbReference>
<dbReference type="InterPro" id="IPR005527">
    <property type="entry name" value="MinE"/>
</dbReference>
<dbReference type="InterPro" id="IPR036707">
    <property type="entry name" value="MinE_sf"/>
</dbReference>
<dbReference type="NCBIfam" id="TIGR01215">
    <property type="entry name" value="minE"/>
    <property type="match status" value="1"/>
</dbReference>
<dbReference type="NCBIfam" id="NF001422">
    <property type="entry name" value="PRK00296.1"/>
    <property type="match status" value="1"/>
</dbReference>
<dbReference type="NCBIfam" id="NF010595">
    <property type="entry name" value="PRK13989.1"/>
    <property type="match status" value="1"/>
</dbReference>
<dbReference type="Pfam" id="PF03776">
    <property type="entry name" value="MinE"/>
    <property type="match status" value="1"/>
</dbReference>
<dbReference type="SUPFAM" id="SSF55229">
    <property type="entry name" value="Cell division protein MinE topological specificity domain"/>
    <property type="match status" value="1"/>
</dbReference>
<evidence type="ECO:0000255" key="1">
    <source>
        <dbReference type="HAMAP-Rule" id="MF_00262"/>
    </source>
</evidence>
<protein>
    <recommendedName>
        <fullName evidence="1">Cell division topological specificity factor</fullName>
    </recommendedName>
</protein>